<gene>
    <name evidence="1" type="primary">UTR4</name>
    <name type="ORF">Kpol_1059p21</name>
</gene>
<sequence>MVQESFDCYLLDIEGTICPISFVKETLFPFFLQNLSKIIEHPTDDQLTILSKFNINDSTELYNHINNLVLNDIKDPILKQLQGHVWQEGYENGLIKAPIYQDSIEFIKDNGNRIYIYSSGSVRAQKLLFEFVACNDGKETIDLRPSILDYFDINTSGVKTESSSYDKIAKTIEHSEHRERILFLSDNPKELEAASSAGLSTRLVIRPGNAPVEDDTKYTSIRSLSEL</sequence>
<feature type="chain" id="PRO_0000394014" description="Enolase-phosphatase E1">
    <location>
        <begin position="1"/>
        <end position="227"/>
    </location>
</feature>
<feature type="binding site" evidence="1">
    <location>
        <position position="12"/>
    </location>
    <ligand>
        <name>Mg(2+)</name>
        <dbReference type="ChEBI" id="CHEBI:18420"/>
    </ligand>
</feature>
<feature type="binding site" evidence="1">
    <location>
        <position position="14"/>
    </location>
    <ligand>
        <name>Mg(2+)</name>
        <dbReference type="ChEBI" id="CHEBI:18420"/>
    </ligand>
</feature>
<feature type="binding site" evidence="1">
    <location>
        <begin position="118"/>
        <end position="119"/>
    </location>
    <ligand>
        <name>substrate</name>
    </ligand>
</feature>
<feature type="binding site" evidence="1">
    <location>
        <position position="159"/>
    </location>
    <ligand>
        <name>substrate</name>
    </ligand>
</feature>
<feature type="binding site" evidence="1">
    <location>
        <position position="186"/>
    </location>
    <ligand>
        <name>Mg(2+)</name>
        <dbReference type="ChEBI" id="CHEBI:18420"/>
    </ligand>
</feature>
<evidence type="ECO:0000255" key="1">
    <source>
        <dbReference type="HAMAP-Rule" id="MF_03117"/>
    </source>
</evidence>
<accession>A7TN25</accession>
<organism>
    <name type="scientific">Vanderwaltozyma polyspora (strain ATCC 22028 / DSM 70294 / BCRC 21397 / CBS 2163 / NBRC 10782 / NRRL Y-8283 / UCD 57-17)</name>
    <name type="common">Kluyveromyces polysporus</name>
    <dbReference type="NCBI Taxonomy" id="436907"/>
    <lineage>
        <taxon>Eukaryota</taxon>
        <taxon>Fungi</taxon>
        <taxon>Dikarya</taxon>
        <taxon>Ascomycota</taxon>
        <taxon>Saccharomycotina</taxon>
        <taxon>Saccharomycetes</taxon>
        <taxon>Saccharomycetales</taxon>
        <taxon>Saccharomycetaceae</taxon>
        <taxon>Vanderwaltozyma</taxon>
    </lineage>
</organism>
<comment type="function">
    <text evidence="1">Bifunctional enzyme that catalyzes the enolization of 2,3-diketo-5-methylthiopentyl-1-phosphate (DK-MTP-1-P) into the intermediate 2-hydroxy-3-keto-5-methylthiopentenyl-1-phosphate (HK-MTPenyl-1-P), which is then dephosphorylated to form the acireductone 1,2-dihydroxy-3-keto-5-methylthiopentene (DHK-MTPene).</text>
</comment>
<comment type="catalytic activity">
    <reaction evidence="1">
        <text>5-methylsulfanyl-2,3-dioxopentyl phosphate + H2O = 1,2-dihydroxy-5-(methylsulfanyl)pent-1-en-3-one + phosphate</text>
        <dbReference type="Rhea" id="RHEA:21700"/>
        <dbReference type="ChEBI" id="CHEBI:15377"/>
        <dbReference type="ChEBI" id="CHEBI:43474"/>
        <dbReference type="ChEBI" id="CHEBI:49252"/>
        <dbReference type="ChEBI" id="CHEBI:58828"/>
        <dbReference type="EC" id="3.1.3.77"/>
    </reaction>
</comment>
<comment type="cofactor">
    <cofactor evidence="1">
        <name>Mg(2+)</name>
        <dbReference type="ChEBI" id="CHEBI:18420"/>
    </cofactor>
    <text evidence="1">Binds 1 Mg(2+) ion per subunit.</text>
</comment>
<comment type="pathway">
    <text evidence="1">Amino-acid biosynthesis; L-methionine biosynthesis via salvage pathway; L-methionine from S-methyl-5-thio-alpha-D-ribose 1-phosphate: step 3/6.</text>
</comment>
<comment type="pathway">
    <text evidence="1">Amino-acid biosynthesis; L-methionine biosynthesis via salvage pathway; L-methionine from S-methyl-5-thio-alpha-D-ribose 1-phosphate: step 4/6.</text>
</comment>
<comment type="subunit">
    <text evidence="1">Monomer.</text>
</comment>
<comment type="subcellular location">
    <subcellularLocation>
        <location evidence="1">Cytoplasm</location>
    </subcellularLocation>
    <subcellularLocation>
        <location evidence="1">Nucleus</location>
    </subcellularLocation>
</comment>
<comment type="similarity">
    <text evidence="1">Belongs to the HAD-like hydrolase superfamily. MasA/MtnC family.</text>
</comment>
<name>ENOPH_VANPO</name>
<proteinExistence type="inferred from homology"/>
<keyword id="KW-0028">Amino-acid biosynthesis</keyword>
<keyword id="KW-0963">Cytoplasm</keyword>
<keyword id="KW-0378">Hydrolase</keyword>
<keyword id="KW-0460">Magnesium</keyword>
<keyword id="KW-0479">Metal-binding</keyword>
<keyword id="KW-0486">Methionine biosynthesis</keyword>
<keyword id="KW-0539">Nucleus</keyword>
<keyword id="KW-1185">Reference proteome</keyword>
<dbReference type="EC" id="3.1.3.77" evidence="1"/>
<dbReference type="EMBL" id="DS480427">
    <property type="protein sequence ID" value="EDO16331.1"/>
    <property type="molecule type" value="Genomic_DNA"/>
</dbReference>
<dbReference type="RefSeq" id="XP_001644189.1">
    <property type="nucleotide sequence ID" value="XM_001644139.1"/>
</dbReference>
<dbReference type="SMR" id="A7TN25"/>
<dbReference type="FunCoup" id="A7TN25">
    <property type="interactions" value="664"/>
</dbReference>
<dbReference type="STRING" id="436907.A7TN25"/>
<dbReference type="GeneID" id="5544492"/>
<dbReference type="KEGG" id="vpo:Kpol_1059p21"/>
<dbReference type="eggNOG" id="KOG2630">
    <property type="taxonomic scope" value="Eukaryota"/>
</dbReference>
<dbReference type="HOGENOM" id="CLU_023273_1_1_1"/>
<dbReference type="InParanoid" id="A7TN25"/>
<dbReference type="OMA" id="LQGMVWE"/>
<dbReference type="OrthoDB" id="272500at2759"/>
<dbReference type="PhylomeDB" id="A7TN25"/>
<dbReference type="UniPathway" id="UPA00904">
    <property type="reaction ID" value="UER00876"/>
</dbReference>
<dbReference type="UniPathway" id="UPA00904">
    <property type="reaction ID" value="UER00877"/>
</dbReference>
<dbReference type="Proteomes" id="UP000000267">
    <property type="component" value="Unassembled WGS sequence"/>
</dbReference>
<dbReference type="GO" id="GO:0005737">
    <property type="term" value="C:cytoplasm"/>
    <property type="evidence" value="ECO:0007669"/>
    <property type="project" value="UniProtKB-SubCell"/>
</dbReference>
<dbReference type="GO" id="GO:0005634">
    <property type="term" value="C:nucleus"/>
    <property type="evidence" value="ECO:0007669"/>
    <property type="project" value="UniProtKB-SubCell"/>
</dbReference>
<dbReference type="GO" id="GO:0043874">
    <property type="term" value="F:acireductone synthase activity"/>
    <property type="evidence" value="ECO:0007669"/>
    <property type="project" value="UniProtKB-EC"/>
</dbReference>
<dbReference type="GO" id="GO:0000287">
    <property type="term" value="F:magnesium ion binding"/>
    <property type="evidence" value="ECO:0007669"/>
    <property type="project" value="UniProtKB-UniRule"/>
</dbReference>
<dbReference type="GO" id="GO:0019509">
    <property type="term" value="P:L-methionine salvage from methylthioadenosine"/>
    <property type="evidence" value="ECO:0007669"/>
    <property type="project" value="UniProtKB-UniRule"/>
</dbReference>
<dbReference type="Gene3D" id="1.10.720.60">
    <property type="match status" value="1"/>
</dbReference>
<dbReference type="Gene3D" id="3.40.50.1000">
    <property type="entry name" value="HAD superfamily/HAD-like"/>
    <property type="match status" value="1"/>
</dbReference>
<dbReference type="HAMAP" id="MF_03117">
    <property type="entry name" value="Salvage_MtnC_euk"/>
    <property type="match status" value="1"/>
</dbReference>
<dbReference type="InterPro" id="IPR023943">
    <property type="entry name" value="Enolase-ppase_E1"/>
</dbReference>
<dbReference type="InterPro" id="IPR027511">
    <property type="entry name" value="ENOPH1_eukaryotes"/>
</dbReference>
<dbReference type="InterPro" id="IPR036412">
    <property type="entry name" value="HAD-like_sf"/>
</dbReference>
<dbReference type="InterPro" id="IPR023214">
    <property type="entry name" value="HAD_sf"/>
</dbReference>
<dbReference type="NCBIfam" id="TIGR01691">
    <property type="entry name" value="enolase-ppase"/>
    <property type="match status" value="1"/>
</dbReference>
<dbReference type="PANTHER" id="PTHR20371">
    <property type="entry name" value="ENOLASE-PHOSPHATASE E1"/>
    <property type="match status" value="1"/>
</dbReference>
<dbReference type="PANTHER" id="PTHR20371:SF1">
    <property type="entry name" value="ENOLASE-PHOSPHATASE E1"/>
    <property type="match status" value="1"/>
</dbReference>
<dbReference type="SFLD" id="SFLDG01133">
    <property type="entry name" value="C1.5.4:_Enolase-phosphatase_Li"/>
    <property type="match status" value="1"/>
</dbReference>
<dbReference type="SFLD" id="SFLDS00003">
    <property type="entry name" value="Haloacid_Dehalogenase"/>
    <property type="match status" value="1"/>
</dbReference>
<dbReference type="SUPFAM" id="SSF56784">
    <property type="entry name" value="HAD-like"/>
    <property type="match status" value="1"/>
</dbReference>
<reference key="1">
    <citation type="journal article" date="2007" name="Proc. Natl. Acad. Sci. U.S.A.">
        <title>Independent sorting-out of thousands of duplicated gene pairs in two yeast species descended from a whole-genome duplication.</title>
        <authorList>
            <person name="Scannell D.R."/>
            <person name="Frank A.C."/>
            <person name="Conant G.C."/>
            <person name="Byrne K.P."/>
            <person name="Woolfit M."/>
            <person name="Wolfe K.H."/>
        </authorList>
    </citation>
    <scope>NUCLEOTIDE SEQUENCE [LARGE SCALE GENOMIC DNA]</scope>
    <source>
        <strain>ATCC 22028 / DSM 70294 / BCRC 21397 / CBS 2163 / NBRC 10782 / NRRL Y-8283 / UCD 57-17</strain>
    </source>
</reference>
<protein>
    <recommendedName>
        <fullName evidence="1">Enolase-phosphatase E1</fullName>
        <ecNumber evidence="1">3.1.3.77</ecNumber>
    </recommendedName>
    <alternativeName>
        <fullName evidence="1">2,3-diketo-5-methylthio-1-phosphopentane phosphatase</fullName>
    </alternativeName>
</protein>